<keyword id="KW-0186">Copper</keyword>
<keyword id="KW-0249">Electron transport</keyword>
<keyword id="KW-0472">Membrane</keyword>
<keyword id="KW-0479">Metal-binding</keyword>
<keyword id="KW-0732">Signal</keyword>
<keyword id="KW-0793">Thylakoid</keyword>
<keyword id="KW-0813">Transport</keyword>
<sequence>MKLIAASLRRLSLAVLTVLLVVSSFAVFTPSASAETYTVKLGSDKGLLVFEPAKLTIKPGDTVEFLNNKVPPHNVVFDAALNPAKSADLAKSLSHKQLLMSPGQSTSTTFPADAPAGEYTFYCEPHRGAGMVGKITVAG</sequence>
<dbReference type="EMBL" id="AJ002362">
    <property type="protein sequence ID" value="CAA05338.2"/>
    <property type="molecule type" value="Genomic_DNA"/>
</dbReference>
<dbReference type="BMRB" id="O52830"/>
<dbReference type="SMR" id="O52830"/>
<dbReference type="IntAct" id="O52830">
    <property type="interactions" value="1"/>
</dbReference>
<dbReference type="GO" id="GO:0031676">
    <property type="term" value="C:plasma membrane-derived thylakoid membrane"/>
    <property type="evidence" value="ECO:0007669"/>
    <property type="project" value="UniProtKB-SubCell"/>
</dbReference>
<dbReference type="GO" id="GO:0005507">
    <property type="term" value="F:copper ion binding"/>
    <property type="evidence" value="ECO:0007669"/>
    <property type="project" value="UniProtKB-UniRule"/>
</dbReference>
<dbReference type="GO" id="GO:0009055">
    <property type="term" value="F:electron transfer activity"/>
    <property type="evidence" value="ECO:0007669"/>
    <property type="project" value="UniProtKB-UniRule"/>
</dbReference>
<dbReference type="CDD" id="cd04219">
    <property type="entry name" value="Plastocyanin"/>
    <property type="match status" value="1"/>
</dbReference>
<dbReference type="Gene3D" id="2.60.40.420">
    <property type="entry name" value="Cupredoxins - blue copper proteins"/>
    <property type="match status" value="1"/>
</dbReference>
<dbReference type="HAMAP" id="MF_00566">
    <property type="entry name" value="Cytb6_f_plastocyanin"/>
    <property type="match status" value="1"/>
</dbReference>
<dbReference type="InterPro" id="IPR000923">
    <property type="entry name" value="BlueCu_1"/>
</dbReference>
<dbReference type="InterPro" id="IPR028871">
    <property type="entry name" value="BlueCu_1_BS"/>
</dbReference>
<dbReference type="InterPro" id="IPR001235">
    <property type="entry name" value="Copper_blue_Plastocyanin"/>
</dbReference>
<dbReference type="InterPro" id="IPR008972">
    <property type="entry name" value="Cupredoxin"/>
</dbReference>
<dbReference type="InterPro" id="IPR002387">
    <property type="entry name" value="Plastocyanin"/>
</dbReference>
<dbReference type="InterPro" id="IPR023511">
    <property type="entry name" value="Plastocyanin_cyanobac"/>
</dbReference>
<dbReference type="NCBIfam" id="TIGR02656">
    <property type="entry name" value="cyanin_plasto"/>
    <property type="match status" value="1"/>
</dbReference>
<dbReference type="PANTHER" id="PTHR34192">
    <property type="entry name" value="PLASTOCYANIN MAJOR ISOFORM, CHLOROPLASTIC-RELATED"/>
    <property type="match status" value="1"/>
</dbReference>
<dbReference type="PANTHER" id="PTHR34192:SF10">
    <property type="entry name" value="PLASTOCYANIN MAJOR ISOFORM, CHLOROPLASTIC-RELATED"/>
    <property type="match status" value="1"/>
</dbReference>
<dbReference type="Pfam" id="PF00127">
    <property type="entry name" value="Copper-bind"/>
    <property type="match status" value="1"/>
</dbReference>
<dbReference type="PRINTS" id="PR00156">
    <property type="entry name" value="COPPERBLUE"/>
</dbReference>
<dbReference type="PRINTS" id="PR00157">
    <property type="entry name" value="PLASTOCYANIN"/>
</dbReference>
<dbReference type="SUPFAM" id="SSF49503">
    <property type="entry name" value="Cupredoxins"/>
    <property type="match status" value="1"/>
</dbReference>
<dbReference type="PROSITE" id="PS00196">
    <property type="entry name" value="COPPER_BLUE"/>
    <property type="match status" value="1"/>
</dbReference>
<evidence type="ECO:0000250" key="1"/>
<evidence type="ECO:0000255" key="2">
    <source>
        <dbReference type="HAMAP-Rule" id="MF_00566"/>
    </source>
</evidence>
<gene>
    <name type="primary">petE</name>
</gene>
<proteinExistence type="evidence at protein level"/>
<accession>O52830</accession>
<feature type="signal peptide" evidence="1">
    <location>
        <begin position="1"/>
        <end position="34"/>
    </location>
</feature>
<feature type="chain" id="PRO_0000002898" description="Plastocyanin">
    <location>
        <begin position="35"/>
        <end position="139"/>
    </location>
</feature>
<feature type="domain" description="Plastocyanin-like">
    <location>
        <begin position="35"/>
        <end position="139"/>
    </location>
</feature>
<feature type="binding site" evidence="2">
    <location>
        <position position="73"/>
    </location>
    <ligand>
        <name>Cu cation</name>
        <dbReference type="ChEBI" id="CHEBI:23378"/>
    </ligand>
</feature>
<feature type="binding site" evidence="2">
    <location>
        <position position="123"/>
    </location>
    <ligand>
        <name>Cu cation</name>
        <dbReference type="ChEBI" id="CHEBI:23378"/>
    </ligand>
</feature>
<feature type="binding site" evidence="2">
    <location>
        <position position="126"/>
    </location>
    <ligand>
        <name>Cu cation</name>
        <dbReference type="ChEBI" id="CHEBI:23378"/>
    </ligand>
</feature>
<feature type="binding site" evidence="2">
    <location>
        <position position="131"/>
    </location>
    <ligand>
        <name>Cu cation</name>
        <dbReference type="ChEBI" id="CHEBI:23378"/>
    </ligand>
</feature>
<protein>
    <recommendedName>
        <fullName>Plastocyanin</fullName>
    </recommendedName>
</protein>
<organism>
    <name type="scientific">Nostoc sp. (strain ATCC 29151 / PCC 7119)</name>
    <name type="common">Anabaena sp.</name>
    <dbReference type="NCBI Taxonomy" id="1168"/>
    <lineage>
        <taxon>Bacteria</taxon>
        <taxon>Bacillati</taxon>
        <taxon>Cyanobacteriota</taxon>
        <taxon>Cyanophyceae</taxon>
        <taxon>Nostocales</taxon>
        <taxon>Nostocaceae</taxon>
        <taxon>Nostoc</taxon>
    </lineage>
</organism>
<name>PLAS_NOSSO</name>
<reference key="1">
    <citation type="journal article" date="1998" name="Biochem. Biophys. Res. Commun.">
        <title>Cloning and correct expression in Escherichia coli of the petE and petJ genes respectively encoding plastocyanin and cytochrome c6 from the cyanobacterium Anabaena sp. PCC 7119.</title>
        <authorList>
            <person name="Molina-Heredia F.P."/>
            <person name="Hervas M."/>
            <person name="Navarro J.A."/>
            <person name="De la Rosa M.A."/>
        </authorList>
    </citation>
    <scope>NUCLEOTIDE SEQUENCE [GENOMIC DNA]</scope>
</reference>
<reference key="2">
    <citation type="submission" date="2004-06" db="EMBL/GenBank/DDBJ databases">
        <authorList>
            <person name="Molina-Heredia F.P."/>
        </authorList>
    </citation>
    <scope>SEQUENCE REVISION TO 132</scope>
</reference>
<comment type="function">
    <text evidence="2">Participates in electron transfer between P700 and the cytochrome b6-f complex in photosystem I.</text>
</comment>
<comment type="cofactor">
    <cofactor evidence="2">
        <name>Cu(2+)</name>
        <dbReference type="ChEBI" id="CHEBI:29036"/>
    </cofactor>
</comment>
<comment type="interaction">
    <interactant intactId="EBI-701517">
        <id>O52830</id>
    </interactant>
    <interactant intactId="EBI-701525">
        <id>Q6H8M0</id>
        <label>petA</label>
    </interactant>
    <organismsDiffer>false</organismsDiffer>
    <experiments>2</experiments>
</comment>
<comment type="subcellular location">
    <subcellularLocation>
        <location evidence="2">Cellular thylakoid membrane</location>
        <topology evidence="2">Peripheral membrane protein</topology>
        <orientation evidence="2">Lumenal side</orientation>
    </subcellularLocation>
    <text>Loosely bound to the thylakoid inner membrane surface.</text>
</comment>
<comment type="similarity">
    <text evidence="2">Belongs to the plastocyanin family.</text>
</comment>